<comment type="similarity">
    <text evidence="1">Belongs to the BshC family.</text>
</comment>
<feature type="chain" id="PRO_0000378272" description="Putative cysteine ligase BshC">
    <location>
        <begin position="1"/>
        <end position="484"/>
    </location>
</feature>
<feature type="coiled-coil region" evidence="1">
    <location>
        <begin position="372"/>
        <end position="435"/>
    </location>
</feature>
<sequence>MEAACLVRRLGLPQGEEALKARLRRPGHPRLREALAAYLKRLQAPEEVFRALERLEVGAVVTGQQAGLLGGPALTFYKAHTALCLADRAGAAGVFWVASQDHDVEEVRHLHLLRDEVPETLSLDLPPLPSGRIPLAPHRERLRAFLGPWAKDYRLGYALEAETLSEFFARVLLAFLGERGLVPFDPMAEELAPLFLEALERELSDPLGSAEAINREAERIRALGGKPPLRRKPGATNLFLETDQRRLLFYEGGAFTDGVRRYTAKELWEIARADPSRLTPAAGLRPVFQDLVLPTAGFVVGPNELRYVAELSGVYARYGLAMPALFLRAFGVVVEPPVRRILEKYRLDPWAFVDEGEAAFLRAAEAWLAPFRAFRDRVEGLLQEASRLVEEAEALEPNLVRPLRRFRARVRGEAERLRRKLLAAQAARDEVLARHLRRLKVHLLPFGLPQERVYPYAMYALRHGEALRRLAEAPWEGRVALYLG</sequence>
<gene>
    <name evidence="1" type="primary">bshC</name>
    <name type="ordered locus">TT_C1201</name>
</gene>
<evidence type="ECO:0000255" key="1">
    <source>
        <dbReference type="HAMAP-Rule" id="MF_01867"/>
    </source>
</evidence>
<protein>
    <recommendedName>
        <fullName evidence="1">Putative cysteine ligase BshC</fullName>
        <ecNumber evidence="1">6.-.-.-</ecNumber>
    </recommendedName>
</protein>
<proteinExistence type="inferred from homology"/>
<dbReference type="EC" id="6.-.-.-" evidence="1"/>
<dbReference type="EMBL" id="AE017221">
    <property type="protein sequence ID" value="AAS81543.1"/>
    <property type="molecule type" value="Genomic_DNA"/>
</dbReference>
<dbReference type="RefSeq" id="WP_011173609.1">
    <property type="nucleotide sequence ID" value="NC_005835.1"/>
</dbReference>
<dbReference type="SMR" id="Q72ID1"/>
<dbReference type="KEGG" id="tth:TT_C1201"/>
<dbReference type="eggNOG" id="COG4365">
    <property type="taxonomic scope" value="Bacteria"/>
</dbReference>
<dbReference type="HOGENOM" id="CLU_022249_1_0_0"/>
<dbReference type="OrthoDB" id="9765151at2"/>
<dbReference type="Proteomes" id="UP000000592">
    <property type="component" value="Chromosome"/>
</dbReference>
<dbReference type="GO" id="GO:0016874">
    <property type="term" value="F:ligase activity"/>
    <property type="evidence" value="ECO:0007669"/>
    <property type="project" value="UniProtKB-UniRule"/>
</dbReference>
<dbReference type="HAMAP" id="MF_01867">
    <property type="entry name" value="BshC"/>
    <property type="match status" value="1"/>
</dbReference>
<dbReference type="InterPro" id="IPR011199">
    <property type="entry name" value="Bacillithiol_biosynth_BshC"/>
</dbReference>
<dbReference type="InterPro" id="IPR055399">
    <property type="entry name" value="CC_BshC"/>
</dbReference>
<dbReference type="InterPro" id="IPR055398">
    <property type="entry name" value="Rossmann-like_BshC"/>
</dbReference>
<dbReference type="NCBIfam" id="TIGR03998">
    <property type="entry name" value="thiol_BshC"/>
    <property type="match status" value="1"/>
</dbReference>
<dbReference type="Pfam" id="PF24850">
    <property type="entry name" value="CC_BshC"/>
    <property type="match status" value="1"/>
</dbReference>
<dbReference type="Pfam" id="PF10079">
    <property type="entry name" value="Rossmann-like_BshC"/>
    <property type="match status" value="1"/>
</dbReference>
<accession>Q72ID1</accession>
<keyword id="KW-0175">Coiled coil</keyword>
<keyword id="KW-0436">Ligase</keyword>
<name>BSHC_THET2</name>
<reference key="1">
    <citation type="journal article" date="2004" name="Nat. Biotechnol.">
        <title>The genome sequence of the extreme thermophile Thermus thermophilus.</title>
        <authorList>
            <person name="Henne A."/>
            <person name="Brueggemann H."/>
            <person name="Raasch C."/>
            <person name="Wiezer A."/>
            <person name="Hartsch T."/>
            <person name="Liesegang H."/>
            <person name="Johann A."/>
            <person name="Lienard T."/>
            <person name="Gohl O."/>
            <person name="Martinez-Arias R."/>
            <person name="Jacobi C."/>
            <person name="Starkuviene V."/>
            <person name="Schlenczeck S."/>
            <person name="Dencker S."/>
            <person name="Huber R."/>
            <person name="Klenk H.-P."/>
            <person name="Kramer W."/>
            <person name="Merkl R."/>
            <person name="Gottschalk G."/>
            <person name="Fritz H.-J."/>
        </authorList>
    </citation>
    <scope>NUCLEOTIDE SEQUENCE [LARGE SCALE GENOMIC DNA]</scope>
    <source>
        <strain>ATCC BAA-163 / DSM 7039 / HB27</strain>
    </source>
</reference>
<organism>
    <name type="scientific">Thermus thermophilus (strain ATCC BAA-163 / DSM 7039 / HB27)</name>
    <dbReference type="NCBI Taxonomy" id="262724"/>
    <lineage>
        <taxon>Bacteria</taxon>
        <taxon>Thermotogati</taxon>
        <taxon>Deinococcota</taxon>
        <taxon>Deinococci</taxon>
        <taxon>Thermales</taxon>
        <taxon>Thermaceae</taxon>
        <taxon>Thermus</taxon>
    </lineage>
</organism>